<proteinExistence type="evidence at transcript level"/>
<reference key="1">
    <citation type="journal article" date="1991" name="J. Cell Sci.">
        <title>Dictyostelium discoideum contains two profilin isoforms that differ in structure and function.</title>
        <authorList>
            <person name="Haugwitz M."/>
            <person name="Noegel A.A."/>
            <person name="Rieger D."/>
            <person name="Lottspeich F."/>
            <person name="Schleicher M."/>
        </authorList>
    </citation>
    <scope>NUCLEOTIDE SEQUENCE [MRNA]</scope>
    <source>
        <strain>AX2</strain>
    </source>
</reference>
<reference key="2">
    <citation type="journal article" date="2005" name="Nature">
        <title>The genome of the social amoeba Dictyostelium discoideum.</title>
        <authorList>
            <person name="Eichinger L."/>
            <person name="Pachebat J.A."/>
            <person name="Gloeckner G."/>
            <person name="Rajandream M.A."/>
            <person name="Sucgang R."/>
            <person name="Berriman M."/>
            <person name="Song J."/>
            <person name="Olsen R."/>
            <person name="Szafranski K."/>
            <person name="Xu Q."/>
            <person name="Tunggal B."/>
            <person name="Kummerfeld S."/>
            <person name="Madera M."/>
            <person name="Konfortov B.A."/>
            <person name="Rivero F."/>
            <person name="Bankier A.T."/>
            <person name="Lehmann R."/>
            <person name="Hamlin N."/>
            <person name="Davies R."/>
            <person name="Gaudet P."/>
            <person name="Fey P."/>
            <person name="Pilcher K."/>
            <person name="Chen G."/>
            <person name="Saunders D."/>
            <person name="Sodergren E.J."/>
            <person name="Davis P."/>
            <person name="Kerhornou A."/>
            <person name="Nie X."/>
            <person name="Hall N."/>
            <person name="Anjard C."/>
            <person name="Hemphill L."/>
            <person name="Bason N."/>
            <person name="Farbrother P."/>
            <person name="Desany B."/>
            <person name="Just E."/>
            <person name="Morio T."/>
            <person name="Rost R."/>
            <person name="Churcher C.M."/>
            <person name="Cooper J."/>
            <person name="Haydock S."/>
            <person name="van Driessche N."/>
            <person name="Cronin A."/>
            <person name="Goodhead I."/>
            <person name="Muzny D.M."/>
            <person name="Mourier T."/>
            <person name="Pain A."/>
            <person name="Lu M."/>
            <person name="Harper D."/>
            <person name="Lindsay R."/>
            <person name="Hauser H."/>
            <person name="James K.D."/>
            <person name="Quiles M."/>
            <person name="Madan Babu M."/>
            <person name="Saito T."/>
            <person name="Buchrieser C."/>
            <person name="Wardroper A."/>
            <person name="Felder M."/>
            <person name="Thangavelu M."/>
            <person name="Johnson D."/>
            <person name="Knights A."/>
            <person name="Loulseged H."/>
            <person name="Mungall K.L."/>
            <person name="Oliver K."/>
            <person name="Price C."/>
            <person name="Quail M.A."/>
            <person name="Urushihara H."/>
            <person name="Hernandez J."/>
            <person name="Rabbinowitsch E."/>
            <person name="Steffen D."/>
            <person name="Sanders M."/>
            <person name="Ma J."/>
            <person name="Kohara Y."/>
            <person name="Sharp S."/>
            <person name="Simmonds M.N."/>
            <person name="Spiegler S."/>
            <person name="Tivey A."/>
            <person name="Sugano S."/>
            <person name="White B."/>
            <person name="Walker D."/>
            <person name="Woodward J.R."/>
            <person name="Winckler T."/>
            <person name="Tanaka Y."/>
            <person name="Shaulsky G."/>
            <person name="Schleicher M."/>
            <person name="Weinstock G.M."/>
            <person name="Rosenthal A."/>
            <person name="Cox E.C."/>
            <person name="Chisholm R.L."/>
            <person name="Gibbs R.A."/>
            <person name="Loomis W.F."/>
            <person name="Platzer M."/>
            <person name="Kay R.R."/>
            <person name="Williams J.G."/>
            <person name="Dear P.H."/>
            <person name="Noegel A.A."/>
            <person name="Barrell B.G."/>
            <person name="Kuspa A."/>
        </authorList>
    </citation>
    <scope>NUCLEOTIDE SEQUENCE [LARGE SCALE GENOMIC DNA]</scope>
    <source>
        <strain>AX4</strain>
    </source>
</reference>
<protein>
    <recommendedName>
        <fullName>Profilin-1</fullName>
    </recommendedName>
    <alternativeName>
        <fullName>Profilin I</fullName>
    </alternativeName>
</protein>
<gene>
    <name type="primary">proA</name>
    <name type="ORF">DDB_G0287125</name>
</gene>
<organism>
    <name type="scientific">Dictyostelium discoideum</name>
    <name type="common">Social amoeba</name>
    <dbReference type="NCBI Taxonomy" id="44689"/>
    <lineage>
        <taxon>Eukaryota</taxon>
        <taxon>Amoebozoa</taxon>
        <taxon>Evosea</taxon>
        <taxon>Eumycetozoa</taxon>
        <taxon>Dictyostelia</taxon>
        <taxon>Dictyosteliales</taxon>
        <taxon>Dictyosteliaceae</taxon>
        <taxon>Dictyostelium</taxon>
    </lineage>
</organism>
<evidence type="ECO:0000305" key="1"/>
<feature type="chain" id="PRO_0000199594" description="Profilin-1">
    <location>
        <begin position="1"/>
        <end position="126"/>
    </location>
</feature>
<dbReference type="EMBL" id="X61581">
    <property type="protein sequence ID" value="CAA43781.1"/>
    <property type="molecule type" value="mRNA"/>
</dbReference>
<dbReference type="EMBL" id="AAFI02000098">
    <property type="protein sequence ID" value="EAL63837.1"/>
    <property type="molecule type" value="Genomic_DNA"/>
</dbReference>
<dbReference type="PIR" id="A53255">
    <property type="entry name" value="FADO1"/>
</dbReference>
<dbReference type="RefSeq" id="XP_637371.1">
    <property type="nucleotide sequence ID" value="XM_632279.1"/>
</dbReference>
<dbReference type="SMR" id="P26199"/>
<dbReference type="FunCoup" id="P26199">
    <property type="interactions" value="93"/>
</dbReference>
<dbReference type="STRING" id="44689.P26199"/>
<dbReference type="PaxDb" id="44689-DDB0191178"/>
<dbReference type="EnsemblProtists" id="EAL63837">
    <property type="protein sequence ID" value="EAL63837"/>
    <property type="gene ID" value="DDB_G0287125"/>
</dbReference>
<dbReference type="GeneID" id="8625993"/>
<dbReference type="KEGG" id="ddi:DDB_G0287125"/>
<dbReference type="dictyBase" id="DDB_G0287125">
    <property type="gene designation" value="proA"/>
</dbReference>
<dbReference type="VEuPathDB" id="AmoebaDB:DDB_G0287125"/>
<dbReference type="eggNOG" id="KOG1755">
    <property type="taxonomic scope" value="Eukaryota"/>
</dbReference>
<dbReference type="HOGENOM" id="CLU_120772_1_1_1"/>
<dbReference type="InParanoid" id="P26199"/>
<dbReference type="OMA" id="QGQKFML"/>
<dbReference type="PhylomeDB" id="P26199"/>
<dbReference type="PRO" id="PR:P26199"/>
<dbReference type="Proteomes" id="UP000002195">
    <property type="component" value="Chromosome 4"/>
</dbReference>
<dbReference type="GO" id="GO:0005938">
    <property type="term" value="C:cell cortex"/>
    <property type="evidence" value="ECO:0000318"/>
    <property type="project" value="GO_Central"/>
</dbReference>
<dbReference type="GO" id="GO:0005856">
    <property type="term" value="C:cytoskeleton"/>
    <property type="evidence" value="ECO:0007669"/>
    <property type="project" value="UniProtKB-SubCell"/>
</dbReference>
<dbReference type="GO" id="GO:0031012">
    <property type="term" value="C:extracellular matrix"/>
    <property type="evidence" value="ECO:0007005"/>
    <property type="project" value="dictyBase"/>
</dbReference>
<dbReference type="GO" id="GO:0003779">
    <property type="term" value="F:actin binding"/>
    <property type="evidence" value="ECO:0000304"/>
    <property type="project" value="dictyBase"/>
</dbReference>
<dbReference type="GO" id="GO:0003785">
    <property type="term" value="F:actin monomer binding"/>
    <property type="evidence" value="ECO:0000314"/>
    <property type="project" value="dictyBase"/>
</dbReference>
<dbReference type="GO" id="GO:0032037">
    <property type="term" value="F:myosin I heavy chain binding"/>
    <property type="evidence" value="ECO:0000353"/>
    <property type="project" value="dictyBase"/>
</dbReference>
<dbReference type="GO" id="GO:0045010">
    <property type="term" value="P:actin nucleation"/>
    <property type="evidence" value="ECO:0000304"/>
    <property type="project" value="dictyBase"/>
</dbReference>
<dbReference type="GO" id="GO:0048870">
    <property type="term" value="P:cell motility"/>
    <property type="evidence" value="ECO:0000315"/>
    <property type="project" value="dictyBase"/>
</dbReference>
<dbReference type="GO" id="GO:0006887">
    <property type="term" value="P:exocytosis"/>
    <property type="evidence" value="ECO:0000316"/>
    <property type="project" value="dictyBase"/>
</dbReference>
<dbReference type="GO" id="GO:0000281">
    <property type="term" value="P:mitotic cytokinesis"/>
    <property type="evidence" value="ECO:0000315"/>
    <property type="project" value="dictyBase"/>
</dbReference>
<dbReference type="GO" id="GO:0030837">
    <property type="term" value="P:negative regulation of actin filament polymerization"/>
    <property type="evidence" value="ECO:0000314"/>
    <property type="project" value="dictyBase"/>
</dbReference>
<dbReference type="GO" id="GO:0050765">
    <property type="term" value="P:negative regulation of phagocytosis"/>
    <property type="evidence" value="ECO:0000316"/>
    <property type="project" value="dictyBase"/>
</dbReference>
<dbReference type="GO" id="GO:0006907">
    <property type="term" value="P:pinocytosis"/>
    <property type="evidence" value="ECO:0000316"/>
    <property type="project" value="dictyBase"/>
</dbReference>
<dbReference type="GO" id="GO:0030838">
    <property type="term" value="P:positive regulation of actin filament polymerization"/>
    <property type="evidence" value="ECO:0000314"/>
    <property type="project" value="dictyBase"/>
</dbReference>
<dbReference type="GO" id="GO:0033299">
    <property type="term" value="P:secretion of lysosomal enzymes"/>
    <property type="evidence" value="ECO:0000316"/>
    <property type="project" value="dictyBase"/>
</dbReference>
<dbReference type="GO" id="GO:0019953">
    <property type="term" value="P:sexual reproduction"/>
    <property type="evidence" value="ECO:0000270"/>
    <property type="project" value="dictyBase"/>
</dbReference>
<dbReference type="GO" id="GO:0030587">
    <property type="term" value="P:sorocarp development"/>
    <property type="evidence" value="ECO:0000315"/>
    <property type="project" value="dictyBase"/>
</dbReference>
<dbReference type="CDD" id="cd00148">
    <property type="entry name" value="PROF"/>
    <property type="match status" value="1"/>
</dbReference>
<dbReference type="FunFam" id="3.30.450.30:FF:000001">
    <property type="entry name" value="Profilin"/>
    <property type="match status" value="1"/>
</dbReference>
<dbReference type="Gene3D" id="3.30.450.30">
    <property type="entry name" value="Dynein light chain 2a, cytoplasmic"/>
    <property type="match status" value="1"/>
</dbReference>
<dbReference type="InterPro" id="IPR048278">
    <property type="entry name" value="PFN"/>
</dbReference>
<dbReference type="InterPro" id="IPR005455">
    <property type="entry name" value="PFN_euk"/>
</dbReference>
<dbReference type="InterPro" id="IPR036140">
    <property type="entry name" value="PFN_sf"/>
</dbReference>
<dbReference type="InterPro" id="IPR027310">
    <property type="entry name" value="Profilin_CS"/>
</dbReference>
<dbReference type="PANTHER" id="PTHR11604">
    <property type="entry name" value="PROFILIN"/>
    <property type="match status" value="1"/>
</dbReference>
<dbReference type="PANTHER" id="PTHR11604:SF0">
    <property type="entry name" value="PROFILIN"/>
    <property type="match status" value="1"/>
</dbReference>
<dbReference type="Pfam" id="PF00235">
    <property type="entry name" value="Profilin"/>
    <property type="match status" value="1"/>
</dbReference>
<dbReference type="PRINTS" id="PR00392">
    <property type="entry name" value="PROFILIN"/>
</dbReference>
<dbReference type="PRINTS" id="PR01640">
    <property type="entry name" value="PROFILINPLNT"/>
</dbReference>
<dbReference type="SMART" id="SM00392">
    <property type="entry name" value="PROF"/>
    <property type="match status" value="1"/>
</dbReference>
<dbReference type="SUPFAM" id="SSF55770">
    <property type="entry name" value="Profilin (actin-binding protein)"/>
    <property type="match status" value="1"/>
</dbReference>
<dbReference type="PROSITE" id="PS00414">
    <property type="entry name" value="PROFILIN"/>
    <property type="match status" value="1"/>
</dbReference>
<sequence>MSWQQYVDEQLTGAGLSQGAILGANDGGVWAKSSGINITKPEGDGIAALFKNPAEVFAKGALIGGVKYMGIKGDPQSIYGKKGATGCVLVRTGQAIIVGIYDDKVQPGSAALIVEKLGDYLRDNGY</sequence>
<keyword id="KW-0009">Actin-binding</keyword>
<keyword id="KW-0963">Cytoplasm</keyword>
<keyword id="KW-0206">Cytoskeleton</keyword>
<keyword id="KW-1185">Reference proteome</keyword>
<name>PROF1_DICDI</name>
<accession>P26199</accession>
<accession>Q54KQ9</accession>
<comment type="function">
    <text>Binds to actin and affects the structure of the cytoskeleton. At high concentrations, profilin prevents the polymerization of actin, whereas it enhances it at low concentrations. By binding to PIP2, it inhibits the formation of IP3 and DG.</text>
</comment>
<comment type="subunit">
    <text>Occurs in many kinds of cells as a complex with monomeric actin in a 1:1 ratio.</text>
</comment>
<comment type="subcellular location">
    <subcellularLocation>
        <location>Cytoplasm</location>
        <location>Cytoskeleton</location>
    </subcellularLocation>
</comment>
<comment type="similarity">
    <text evidence="1">Belongs to the profilin family.</text>
</comment>